<name>RL28_LACLS</name>
<reference key="1">
    <citation type="journal article" date="2006" name="Proc. Natl. Acad. Sci. U.S.A.">
        <title>Comparative genomics of the lactic acid bacteria.</title>
        <authorList>
            <person name="Makarova K.S."/>
            <person name="Slesarev A."/>
            <person name="Wolf Y.I."/>
            <person name="Sorokin A."/>
            <person name="Mirkin B."/>
            <person name="Koonin E.V."/>
            <person name="Pavlov A."/>
            <person name="Pavlova N."/>
            <person name="Karamychev V."/>
            <person name="Polouchine N."/>
            <person name="Shakhova V."/>
            <person name="Grigoriev I."/>
            <person name="Lou Y."/>
            <person name="Rohksar D."/>
            <person name="Lucas S."/>
            <person name="Huang K."/>
            <person name="Goodstein D.M."/>
            <person name="Hawkins T."/>
            <person name="Plengvidhya V."/>
            <person name="Welker D."/>
            <person name="Hughes J."/>
            <person name="Goh Y."/>
            <person name="Benson A."/>
            <person name="Baldwin K."/>
            <person name="Lee J.-H."/>
            <person name="Diaz-Muniz I."/>
            <person name="Dosti B."/>
            <person name="Smeianov V."/>
            <person name="Wechter W."/>
            <person name="Barabote R."/>
            <person name="Lorca G."/>
            <person name="Altermann E."/>
            <person name="Barrangou R."/>
            <person name="Ganesan B."/>
            <person name="Xie Y."/>
            <person name="Rawsthorne H."/>
            <person name="Tamir D."/>
            <person name="Parker C."/>
            <person name="Breidt F."/>
            <person name="Broadbent J.R."/>
            <person name="Hutkins R."/>
            <person name="O'Sullivan D."/>
            <person name="Steele J."/>
            <person name="Unlu G."/>
            <person name="Saier M.H. Jr."/>
            <person name="Klaenhammer T."/>
            <person name="Richardson P."/>
            <person name="Kozyavkin S."/>
            <person name="Weimer B.C."/>
            <person name="Mills D.A."/>
        </authorList>
    </citation>
    <scope>NUCLEOTIDE SEQUENCE [LARGE SCALE GENOMIC DNA]</scope>
    <source>
        <strain>SK11</strain>
    </source>
</reference>
<keyword id="KW-0687">Ribonucleoprotein</keyword>
<keyword id="KW-0689">Ribosomal protein</keyword>
<feature type="chain" id="PRO_1000007264" description="Large ribosomal subunit protein bL28">
    <location>
        <begin position="1"/>
        <end position="64"/>
    </location>
</feature>
<feature type="region of interest" description="Disordered" evidence="2">
    <location>
        <begin position="1"/>
        <end position="23"/>
    </location>
</feature>
<feature type="compositionally biased region" description="Polar residues" evidence="2">
    <location>
        <begin position="11"/>
        <end position="23"/>
    </location>
</feature>
<dbReference type="EMBL" id="CP000425">
    <property type="protein sequence ID" value="ABJ71816.1"/>
    <property type="molecule type" value="Genomic_DNA"/>
</dbReference>
<dbReference type="RefSeq" id="WP_003129776.1">
    <property type="nucleotide sequence ID" value="NC_008527.1"/>
</dbReference>
<dbReference type="SMR" id="Q032Q6"/>
<dbReference type="GeneID" id="89632332"/>
<dbReference type="KEGG" id="llc:LACR_0198"/>
<dbReference type="HOGENOM" id="CLU_064548_7_1_9"/>
<dbReference type="Proteomes" id="UP000000240">
    <property type="component" value="Chromosome"/>
</dbReference>
<dbReference type="GO" id="GO:1990904">
    <property type="term" value="C:ribonucleoprotein complex"/>
    <property type="evidence" value="ECO:0007669"/>
    <property type="project" value="UniProtKB-KW"/>
</dbReference>
<dbReference type="GO" id="GO:0005840">
    <property type="term" value="C:ribosome"/>
    <property type="evidence" value="ECO:0007669"/>
    <property type="project" value="UniProtKB-KW"/>
</dbReference>
<dbReference type="GO" id="GO:0003735">
    <property type="term" value="F:structural constituent of ribosome"/>
    <property type="evidence" value="ECO:0007669"/>
    <property type="project" value="InterPro"/>
</dbReference>
<dbReference type="GO" id="GO:0006412">
    <property type="term" value="P:translation"/>
    <property type="evidence" value="ECO:0007669"/>
    <property type="project" value="UniProtKB-UniRule"/>
</dbReference>
<dbReference type="Gene3D" id="2.30.170.40">
    <property type="entry name" value="Ribosomal protein L28/L24"/>
    <property type="match status" value="1"/>
</dbReference>
<dbReference type="HAMAP" id="MF_00373">
    <property type="entry name" value="Ribosomal_bL28"/>
    <property type="match status" value="1"/>
</dbReference>
<dbReference type="InterPro" id="IPR050096">
    <property type="entry name" value="Bacterial_rp_bL28"/>
</dbReference>
<dbReference type="InterPro" id="IPR026569">
    <property type="entry name" value="Ribosomal_bL28"/>
</dbReference>
<dbReference type="InterPro" id="IPR034704">
    <property type="entry name" value="Ribosomal_bL28/bL31-like_sf"/>
</dbReference>
<dbReference type="InterPro" id="IPR001383">
    <property type="entry name" value="Ribosomal_bL28_bact-type"/>
</dbReference>
<dbReference type="InterPro" id="IPR037147">
    <property type="entry name" value="Ribosomal_bL28_sf"/>
</dbReference>
<dbReference type="NCBIfam" id="TIGR00009">
    <property type="entry name" value="L28"/>
    <property type="match status" value="1"/>
</dbReference>
<dbReference type="PANTHER" id="PTHR39080">
    <property type="entry name" value="50S RIBOSOMAL PROTEIN L28"/>
    <property type="match status" value="1"/>
</dbReference>
<dbReference type="PANTHER" id="PTHR39080:SF1">
    <property type="entry name" value="LARGE RIBOSOMAL SUBUNIT PROTEIN BL28A"/>
    <property type="match status" value="1"/>
</dbReference>
<dbReference type="Pfam" id="PF00830">
    <property type="entry name" value="Ribosomal_L28"/>
    <property type="match status" value="1"/>
</dbReference>
<dbReference type="SUPFAM" id="SSF143800">
    <property type="entry name" value="L28p-like"/>
    <property type="match status" value="1"/>
</dbReference>
<organism>
    <name type="scientific">Lactococcus lactis subsp. cremoris (strain SK11)</name>
    <dbReference type="NCBI Taxonomy" id="272622"/>
    <lineage>
        <taxon>Bacteria</taxon>
        <taxon>Bacillati</taxon>
        <taxon>Bacillota</taxon>
        <taxon>Bacilli</taxon>
        <taxon>Lactobacillales</taxon>
        <taxon>Streptococcaceae</taxon>
        <taxon>Lactococcus</taxon>
        <taxon>Lactococcus cremoris subsp. cremoris</taxon>
    </lineage>
</organism>
<proteinExistence type="inferred from homology"/>
<evidence type="ECO:0000255" key="1">
    <source>
        <dbReference type="HAMAP-Rule" id="MF_00373"/>
    </source>
</evidence>
<evidence type="ECO:0000256" key="2">
    <source>
        <dbReference type="SAM" id="MobiDB-lite"/>
    </source>
</evidence>
<evidence type="ECO:0000305" key="3"/>
<gene>
    <name evidence="1" type="primary">rpmB</name>
    <name type="ordered locus">LACR_0198</name>
</gene>
<protein>
    <recommendedName>
        <fullName evidence="1">Large ribosomal subunit protein bL28</fullName>
    </recommendedName>
    <alternativeName>
        <fullName evidence="3">50S ribosomal protein L28</fullName>
    </alternativeName>
</protein>
<sequence length="64" mass="7173">MSKECYFTGRKTVSSNNRSHAMNQTKRVVKPNLQKVTILENGELKTVWASAKALKKLPAGVERV</sequence>
<accession>Q032Q6</accession>
<comment type="similarity">
    <text evidence="1">Belongs to the bacterial ribosomal protein bL28 family.</text>
</comment>